<protein>
    <recommendedName>
        <fullName evidence="1">UPF0284 protein STK_21430</fullName>
    </recommendedName>
</protein>
<accession>Q96YM9</accession>
<sequence>MSVKIFNGEFDIPENSRSLYILVIATTDISLIPGLTVAGATPELTHFTPAADAEFLIKGKCSVINTVPVTPNGIPTPAIITRASLEFVKIPRLVVNAGSRIKPNLPLIDLGGEPGGDIRKGSLRKEVAERILNNGVSLGEEFSNSFDFLIIGESIPAGTTTAMAVLVGLGYDALDKVSSASPENPKELKKKIVYEAIKDLPSDLMGKLAKLSDPMLLGVSGIALGFKGKILLAGGTQMTAAAAIIKEFNKNKLKDIAIGTTKWIINDRSSDIIGLAKAVGIPILAAWLDFTNSKFEGLKVYEKGFVKEGVGAGGASIYAMKRGVTNEQILGKVEEIYQRITTNLM</sequence>
<keyword id="KW-1185">Reference proteome</keyword>
<gene>
    <name type="ordered locus">STK_21430</name>
</gene>
<feature type="chain" id="PRO_0000151062" description="UPF0284 protein STK_21430">
    <location>
        <begin position="1"/>
        <end position="345"/>
    </location>
</feature>
<reference key="1">
    <citation type="journal article" date="2001" name="DNA Res.">
        <title>Complete genome sequence of an aerobic thermoacidophilic Crenarchaeon, Sulfolobus tokodaii strain7.</title>
        <authorList>
            <person name="Kawarabayasi Y."/>
            <person name="Hino Y."/>
            <person name="Horikawa H."/>
            <person name="Jin-no K."/>
            <person name="Takahashi M."/>
            <person name="Sekine M."/>
            <person name="Baba S."/>
            <person name="Ankai A."/>
            <person name="Kosugi H."/>
            <person name="Hosoyama A."/>
            <person name="Fukui S."/>
            <person name="Nagai Y."/>
            <person name="Nishijima K."/>
            <person name="Otsuka R."/>
            <person name="Nakazawa H."/>
            <person name="Takamiya M."/>
            <person name="Kato Y."/>
            <person name="Yoshizawa T."/>
            <person name="Tanaka T."/>
            <person name="Kudoh Y."/>
            <person name="Yamazaki J."/>
            <person name="Kushida N."/>
            <person name="Oguchi A."/>
            <person name="Aoki K."/>
            <person name="Masuda S."/>
            <person name="Yanagii M."/>
            <person name="Nishimura M."/>
            <person name="Yamagishi A."/>
            <person name="Oshima T."/>
            <person name="Kikuchi H."/>
        </authorList>
    </citation>
    <scope>NUCLEOTIDE SEQUENCE [LARGE SCALE GENOMIC DNA]</scope>
    <source>
        <strain>DSM 16993 / JCM 10545 / NBRC 100140 / 7</strain>
    </source>
</reference>
<name>Y2143_SULTO</name>
<evidence type="ECO:0000255" key="1">
    <source>
        <dbReference type="HAMAP-Rule" id="MF_01086"/>
    </source>
</evidence>
<organism>
    <name type="scientific">Sulfurisphaera tokodaii (strain DSM 16993 / JCM 10545 / NBRC 100140 / 7)</name>
    <name type="common">Sulfolobus tokodaii</name>
    <dbReference type="NCBI Taxonomy" id="273063"/>
    <lineage>
        <taxon>Archaea</taxon>
        <taxon>Thermoproteota</taxon>
        <taxon>Thermoprotei</taxon>
        <taxon>Sulfolobales</taxon>
        <taxon>Sulfolobaceae</taxon>
        <taxon>Sulfurisphaera</taxon>
    </lineage>
</organism>
<comment type="similarity">
    <text evidence="1">Belongs to the UPF0284 family.</text>
</comment>
<dbReference type="EMBL" id="BA000023">
    <property type="protein sequence ID" value="BAB67248.1"/>
    <property type="molecule type" value="Genomic_DNA"/>
</dbReference>
<dbReference type="SMR" id="Q96YM9"/>
<dbReference type="STRING" id="273063.STK_21430"/>
<dbReference type="KEGG" id="sto:STK_21430"/>
<dbReference type="PATRIC" id="fig|273063.9.peg.2434"/>
<dbReference type="eggNOG" id="arCOG04272">
    <property type="taxonomic scope" value="Archaea"/>
</dbReference>
<dbReference type="OrthoDB" id="9136at2157"/>
<dbReference type="Proteomes" id="UP000001015">
    <property type="component" value="Chromosome"/>
</dbReference>
<dbReference type="GO" id="GO:0008939">
    <property type="term" value="F:nicotinate-nucleotide-dimethylbenzimidazole phosphoribosyltransferase activity"/>
    <property type="evidence" value="ECO:0007669"/>
    <property type="project" value="InterPro"/>
</dbReference>
<dbReference type="CDD" id="cd02439">
    <property type="entry name" value="DMB-PRT_CobT"/>
    <property type="match status" value="1"/>
</dbReference>
<dbReference type="Gene3D" id="3.40.50.10210">
    <property type="match status" value="1"/>
</dbReference>
<dbReference type="HAMAP" id="MF_01086">
    <property type="entry name" value="UPF0284"/>
    <property type="match status" value="1"/>
</dbReference>
<dbReference type="InterPro" id="IPR003200">
    <property type="entry name" value="Nict_dMeBzImd_PRibTrfase"/>
</dbReference>
<dbReference type="InterPro" id="IPR002805">
    <property type="entry name" value="Nict_dMeBzImd_PRibTrfase_arc"/>
</dbReference>
<dbReference type="InterPro" id="IPR036087">
    <property type="entry name" value="Nict_dMeBzImd_PRibTrfase_sf"/>
</dbReference>
<dbReference type="NCBIfam" id="TIGR00303">
    <property type="entry name" value="nicotinate mononucleotide-dependent phosphoribosyltransferase CobT"/>
    <property type="match status" value="1"/>
</dbReference>
<dbReference type="NCBIfam" id="NF003368">
    <property type="entry name" value="PRK04447.1-1"/>
    <property type="match status" value="1"/>
</dbReference>
<dbReference type="NCBIfam" id="NF003372">
    <property type="entry name" value="PRK04447.1-5"/>
    <property type="match status" value="1"/>
</dbReference>
<dbReference type="PANTHER" id="PTHR38811">
    <property type="match status" value="1"/>
</dbReference>
<dbReference type="PANTHER" id="PTHR38811:SF1">
    <property type="entry name" value="UPF0284 PROTEIN SLL1500"/>
    <property type="match status" value="1"/>
</dbReference>
<dbReference type="SUPFAM" id="SSF52733">
    <property type="entry name" value="Nicotinate mononucleotide:5,6-dimethylbenzimidazole phosphoribosyltransferase (CobT)"/>
    <property type="match status" value="1"/>
</dbReference>
<proteinExistence type="inferred from homology"/>